<dbReference type="EMBL" id="CP000878">
    <property type="protein sequence ID" value="ABX08454.1"/>
    <property type="molecule type" value="Genomic_DNA"/>
</dbReference>
<dbReference type="RefSeq" id="WP_012195077.1">
    <property type="nucleotide sequence ID" value="NC_009976.1"/>
</dbReference>
<dbReference type="SMR" id="A9BEE4"/>
<dbReference type="STRING" id="93059.P9211_05231"/>
<dbReference type="KEGG" id="pmj:P9211_05231"/>
<dbReference type="eggNOG" id="COG0233">
    <property type="taxonomic scope" value="Bacteria"/>
</dbReference>
<dbReference type="HOGENOM" id="CLU_073981_2_0_3"/>
<dbReference type="OrthoDB" id="9804006at2"/>
<dbReference type="Proteomes" id="UP000000788">
    <property type="component" value="Chromosome"/>
</dbReference>
<dbReference type="GO" id="GO:0005737">
    <property type="term" value="C:cytoplasm"/>
    <property type="evidence" value="ECO:0007669"/>
    <property type="project" value="UniProtKB-SubCell"/>
</dbReference>
<dbReference type="GO" id="GO:0043023">
    <property type="term" value="F:ribosomal large subunit binding"/>
    <property type="evidence" value="ECO:0007669"/>
    <property type="project" value="TreeGrafter"/>
</dbReference>
<dbReference type="GO" id="GO:0006415">
    <property type="term" value="P:translational termination"/>
    <property type="evidence" value="ECO:0007669"/>
    <property type="project" value="UniProtKB-UniRule"/>
</dbReference>
<dbReference type="CDD" id="cd00520">
    <property type="entry name" value="RRF"/>
    <property type="match status" value="1"/>
</dbReference>
<dbReference type="FunFam" id="1.10.132.20:FF:000001">
    <property type="entry name" value="Ribosome-recycling factor"/>
    <property type="match status" value="1"/>
</dbReference>
<dbReference type="FunFam" id="3.30.1360.40:FF:000001">
    <property type="entry name" value="Ribosome-recycling factor"/>
    <property type="match status" value="1"/>
</dbReference>
<dbReference type="Gene3D" id="3.30.1360.40">
    <property type="match status" value="1"/>
</dbReference>
<dbReference type="Gene3D" id="1.10.132.20">
    <property type="entry name" value="Ribosome-recycling factor"/>
    <property type="match status" value="1"/>
</dbReference>
<dbReference type="HAMAP" id="MF_00040">
    <property type="entry name" value="RRF"/>
    <property type="match status" value="1"/>
</dbReference>
<dbReference type="InterPro" id="IPR002661">
    <property type="entry name" value="Ribosome_recyc_fac"/>
</dbReference>
<dbReference type="InterPro" id="IPR023584">
    <property type="entry name" value="Ribosome_recyc_fac_dom"/>
</dbReference>
<dbReference type="InterPro" id="IPR036191">
    <property type="entry name" value="RRF_sf"/>
</dbReference>
<dbReference type="NCBIfam" id="TIGR00496">
    <property type="entry name" value="frr"/>
    <property type="match status" value="1"/>
</dbReference>
<dbReference type="PANTHER" id="PTHR20982:SF3">
    <property type="entry name" value="MITOCHONDRIAL RIBOSOME RECYCLING FACTOR PSEUDO 1"/>
    <property type="match status" value="1"/>
</dbReference>
<dbReference type="PANTHER" id="PTHR20982">
    <property type="entry name" value="RIBOSOME RECYCLING FACTOR"/>
    <property type="match status" value="1"/>
</dbReference>
<dbReference type="Pfam" id="PF01765">
    <property type="entry name" value="RRF"/>
    <property type="match status" value="1"/>
</dbReference>
<dbReference type="SUPFAM" id="SSF55194">
    <property type="entry name" value="Ribosome recycling factor, RRF"/>
    <property type="match status" value="1"/>
</dbReference>
<feature type="chain" id="PRO_1000090770" description="Ribosome-recycling factor">
    <location>
        <begin position="1"/>
        <end position="182"/>
    </location>
</feature>
<feature type="region of interest" description="Disordered" evidence="2">
    <location>
        <begin position="137"/>
        <end position="158"/>
    </location>
</feature>
<organism>
    <name type="scientific">Prochlorococcus marinus (strain MIT 9211)</name>
    <dbReference type="NCBI Taxonomy" id="93059"/>
    <lineage>
        <taxon>Bacteria</taxon>
        <taxon>Bacillati</taxon>
        <taxon>Cyanobacteriota</taxon>
        <taxon>Cyanophyceae</taxon>
        <taxon>Synechococcales</taxon>
        <taxon>Prochlorococcaceae</taxon>
        <taxon>Prochlorococcus</taxon>
    </lineage>
</organism>
<proteinExistence type="inferred from homology"/>
<comment type="function">
    <text evidence="1">Responsible for the release of ribosomes from messenger RNA at the termination of protein biosynthesis. May increase the efficiency of translation by recycling ribosomes from one round of translation to another.</text>
</comment>
<comment type="subcellular location">
    <subcellularLocation>
        <location evidence="1">Cytoplasm</location>
    </subcellularLocation>
</comment>
<comment type="similarity">
    <text evidence="1">Belongs to the RRF family.</text>
</comment>
<name>RRF_PROM4</name>
<accession>A9BEE4</accession>
<gene>
    <name evidence="1" type="primary">frr</name>
    <name type="ordered locus">P9211_05231</name>
</gene>
<reference key="1">
    <citation type="journal article" date="2007" name="PLoS Genet.">
        <title>Patterns and implications of gene gain and loss in the evolution of Prochlorococcus.</title>
        <authorList>
            <person name="Kettler G.C."/>
            <person name="Martiny A.C."/>
            <person name="Huang K."/>
            <person name="Zucker J."/>
            <person name="Coleman M.L."/>
            <person name="Rodrigue S."/>
            <person name="Chen F."/>
            <person name="Lapidus A."/>
            <person name="Ferriera S."/>
            <person name="Johnson J."/>
            <person name="Steglich C."/>
            <person name="Church G.M."/>
            <person name="Richardson P."/>
            <person name="Chisholm S.W."/>
        </authorList>
    </citation>
    <scope>NUCLEOTIDE SEQUENCE [LARGE SCALE GENOMIC DNA]</scope>
    <source>
        <strain>MIT 9211</strain>
    </source>
</reference>
<sequence length="182" mass="20836">MITKELEQNMRKSVEAAQRNFNTIRTGRANTSLLDRLTVEYYGADTPLKSLATISTPDSQTISIQPFDLSSLVLIEKSIAMSDLGFTPNNDGKIIRINIPPLTEERRKEFCKLASKYAEEGKVALRNIRRDAIERIKKSEKESEISEDQSRDEQDNVQKLTDRFITEIEKNLSDKEQEILKV</sequence>
<protein>
    <recommendedName>
        <fullName evidence="1">Ribosome-recycling factor</fullName>
        <shortName evidence="1">RRF</shortName>
    </recommendedName>
    <alternativeName>
        <fullName evidence="1">Ribosome-releasing factor</fullName>
    </alternativeName>
</protein>
<keyword id="KW-0963">Cytoplasm</keyword>
<keyword id="KW-0648">Protein biosynthesis</keyword>
<keyword id="KW-1185">Reference proteome</keyword>
<evidence type="ECO:0000255" key="1">
    <source>
        <dbReference type="HAMAP-Rule" id="MF_00040"/>
    </source>
</evidence>
<evidence type="ECO:0000256" key="2">
    <source>
        <dbReference type="SAM" id="MobiDB-lite"/>
    </source>
</evidence>